<gene>
    <name evidence="1" type="primary">hisH</name>
    <name type="ordered locus">Bcer98_1131</name>
</gene>
<protein>
    <recommendedName>
        <fullName evidence="1">Imidazole glycerol phosphate synthase subunit HisH</fullName>
        <ecNumber evidence="1">4.3.2.10</ecNumber>
    </recommendedName>
    <alternativeName>
        <fullName evidence="1">IGP synthase glutaminase subunit</fullName>
        <ecNumber evidence="1">3.5.1.2</ecNumber>
    </alternativeName>
    <alternativeName>
        <fullName evidence="1">IGP synthase subunit HisH</fullName>
    </alternativeName>
    <alternativeName>
        <fullName evidence="1">ImGP synthase subunit HisH</fullName>
        <shortName evidence="1">IGPS subunit HisH</shortName>
    </alternativeName>
</protein>
<accession>A7GMU8</accession>
<comment type="function">
    <text evidence="1">IGPS catalyzes the conversion of PRFAR and glutamine to IGP, AICAR and glutamate. The HisH subunit catalyzes the hydrolysis of glutamine to glutamate and ammonia as part of the synthesis of IGP and AICAR. The resulting ammonia molecule is channeled to the active site of HisF.</text>
</comment>
<comment type="catalytic activity">
    <reaction evidence="1">
        <text>5-[(5-phospho-1-deoxy-D-ribulos-1-ylimino)methylamino]-1-(5-phospho-beta-D-ribosyl)imidazole-4-carboxamide + L-glutamine = D-erythro-1-(imidazol-4-yl)glycerol 3-phosphate + 5-amino-1-(5-phospho-beta-D-ribosyl)imidazole-4-carboxamide + L-glutamate + H(+)</text>
        <dbReference type="Rhea" id="RHEA:24793"/>
        <dbReference type="ChEBI" id="CHEBI:15378"/>
        <dbReference type="ChEBI" id="CHEBI:29985"/>
        <dbReference type="ChEBI" id="CHEBI:58278"/>
        <dbReference type="ChEBI" id="CHEBI:58359"/>
        <dbReference type="ChEBI" id="CHEBI:58475"/>
        <dbReference type="ChEBI" id="CHEBI:58525"/>
        <dbReference type="EC" id="4.3.2.10"/>
    </reaction>
</comment>
<comment type="catalytic activity">
    <reaction evidence="1">
        <text>L-glutamine + H2O = L-glutamate + NH4(+)</text>
        <dbReference type="Rhea" id="RHEA:15889"/>
        <dbReference type="ChEBI" id="CHEBI:15377"/>
        <dbReference type="ChEBI" id="CHEBI:28938"/>
        <dbReference type="ChEBI" id="CHEBI:29985"/>
        <dbReference type="ChEBI" id="CHEBI:58359"/>
        <dbReference type="EC" id="3.5.1.2"/>
    </reaction>
</comment>
<comment type="pathway">
    <text evidence="1">Amino-acid biosynthesis; L-histidine biosynthesis; L-histidine from 5-phospho-alpha-D-ribose 1-diphosphate: step 5/9.</text>
</comment>
<comment type="subunit">
    <text evidence="1">Heterodimer of HisH and HisF.</text>
</comment>
<comment type="subcellular location">
    <subcellularLocation>
        <location evidence="1">Cytoplasm</location>
    </subcellularLocation>
</comment>
<sequence length="209" mass="22946">MIAIIDYGMGNIRSIEQALTSIGVEHLVTDRQREIVKSDGVILPGVGAFPKAMEALEAKKLVTVLQECGKTGKPLLGICLGMQLLFEKSEEMKSSNGLGLLPGVVRKLQVPYKIPHMGWNRLTKTKEMPIWNRVADGSFVYYVHSYYAECPNDMICGTSEYGISVPGLVAKGNIFGAQFHPEKSGEIGIQMLANFKGVVKQWKSSQLSI</sequence>
<proteinExistence type="inferred from homology"/>
<keyword id="KW-0028">Amino-acid biosynthesis</keyword>
<keyword id="KW-0963">Cytoplasm</keyword>
<keyword id="KW-0315">Glutamine amidotransferase</keyword>
<keyword id="KW-0368">Histidine biosynthesis</keyword>
<keyword id="KW-0378">Hydrolase</keyword>
<keyword id="KW-0456">Lyase</keyword>
<dbReference type="EC" id="4.3.2.10" evidence="1"/>
<dbReference type="EC" id="3.5.1.2" evidence="1"/>
<dbReference type="EMBL" id="CP000764">
    <property type="protein sequence ID" value="ABS21456.1"/>
    <property type="molecule type" value="Genomic_DNA"/>
</dbReference>
<dbReference type="RefSeq" id="WP_011984209.1">
    <property type="nucleotide sequence ID" value="NC_009674.1"/>
</dbReference>
<dbReference type="SMR" id="A7GMU8"/>
<dbReference type="STRING" id="315749.Bcer98_1131"/>
<dbReference type="GeneID" id="33896487"/>
<dbReference type="KEGG" id="bcy:Bcer98_1131"/>
<dbReference type="eggNOG" id="COG0118">
    <property type="taxonomic scope" value="Bacteria"/>
</dbReference>
<dbReference type="HOGENOM" id="CLU_071837_2_2_9"/>
<dbReference type="OrthoDB" id="9807137at2"/>
<dbReference type="UniPathway" id="UPA00031">
    <property type="reaction ID" value="UER00010"/>
</dbReference>
<dbReference type="Proteomes" id="UP000002300">
    <property type="component" value="Chromosome"/>
</dbReference>
<dbReference type="GO" id="GO:0005737">
    <property type="term" value="C:cytoplasm"/>
    <property type="evidence" value="ECO:0007669"/>
    <property type="project" value="UniProtKB-SubCell"/>
</dbReference>
<dbReference type="GO" id="GO:0004359">
    <property type="term" value="F:glutaminase activity"/>
    <property type="evidence" value="ECO:0007669"/>
    <property type="project" value="UniProtKB-EC"/>
</dbReference>
<dbReference type="GO" id="GO:0000107">
    <property type="term" value="F:imidazoleglycerol-phosphate synthase activity"/>
    <property type="evidence" value="ECO:0007669"/>
    <property type="project" value="UniProtKB-UniRule"/>
</dbReference>
<dbReference type="GO" id="GO:0016829">
    <property type="term" value="F:lyase activity"/>
    <property type="evidence" value="ECO:0007669"/>
    <property type="project" value="UniProtKB-KW"/>
</dbReference>
<dbReference type="GO" id="GO:0000105">
    <property type="term" value="P:L-histidine biosynthetic process"/>
    <property type="evidence" value="ECO:0007669"/>
    <property type="project" value="UniProtKB-UniRule"/>
</dbReference>
<dbReference type="CDD" id="cd01748">
    <property type="entry name" value="GATase1_IGP_Synthase"/>
    <property type="match status" value="1"/>
</dbReference>
<dbReference type="FunFam" id="3.40.50.880:FF:000028">
    <property type="entry name" value="Imidazole glycerol phosphate synthase subunit HisH"/>
    <property type="match status" value="1"/>
</dbReference>
<dbReference type="Gene3D" id="3.40.50.880">
    <property type="match status" value="1"/>
</dbReference>
<dbReference type="HAMAP" id="MF_00278">
    <property type="entry name" value="HisH"/>
    <property type="match status" value="1"/>
</dbReference>
<dbReference type="InterPro" id="IPR029062">
    <property type="entry name" value="Class_I_gatase-like"/>
</dbReference>
<dbReference type="InterPro" id="IPR017926">
    <property type="entry name" value="GATASE"/>
</dbReference>
<dbReference type="InterPro" id="IPR010139">
    <property type="entry name" value="Imidazole-glycPsynth_HisH"/>
</dbReference>
<dbReference type="NCBIfam" id="TIGR01855">
    <property type="entry name" value="IMP_synth_hisH"/>
    <property type="match status" value="1"/>
</dbReference>
<dbReference type="PANTHER" id="PTHR42701">
    <property type="entry name" value="IMIDAZOLE GLYCEROL PHOSPHATE SYNTHASE SUBUNIT HISH"/>
    <property type="match status" value="1"/>
</dbReference>
<dbReference type="PANTHER" id="PTHR42701:SF1">
    <property type="entry name" value="IMIDAZOLE GLYCEROL PHOSPHATE SYNTHASE SUBUNIT HISH"/>
    <property type="match status" value="1"/>
</dbReference>
<dbReference type="Pfam" id="PF00117">
    <property type="entry name" value="GATase"/>
    <property type="match status" value="1"/>
</dbReference>
<dbReference type="PIRSF" id="PIRSF000495">
    <property type="entry name" value="Amidotransf_hisH"/>
    <property type="match status" value="1"/>
</dbReference>
<dbReference type="SUPFAM" id="SSF52317">
    <property type="entry name" value="Class I glutamine amidotransferase-like"/>
    <property type="match status" value="1"/>
</dbReference>
<dbReference type="PROSITE" id="PS51273">
    <property type="entry name" value="GATASE_TYPE_1"/>
    <property type="match status" value="1"/>
</dbReference>
<organism>
    <name type="scientific">Bacillus cytotoxicus (strain DSM 22905 / CIP 110041 / 391-98 / NVH 391-98)</name>
    <dbReference type="NCBI Taxonomy" id="315749"/>
    <lineage>
        <taxon>Bacteria</taxon>
        <taxon>Bacillati</taxon>
        <taxon>Bacillota</taxon>
        <taxon>Bacilli</taxon>
        <taxon>Bacillales</taxon>
        <taxon>Bacillaceae</taxon>
        <taxon>Bacillus</taxon>
        <taxon>Bacillus cereus group</taxon>
    </lineage>
</organism>
<evidence type="ECO:0000255" key="1">
    <source>
        <dbReference type="HAMAP-Rule" id="MF_00278"/>
    </source>
</evidence>
<feature type="chain" id="PRO_1000114774" description="Imidazole glycerol phosphate synthase subunit HisH">
    <location>
        <begin position="1"/>
        <end position="209"/>
    </location>
</feature>
<feature type="domain" description="Glutamine amidotransferase type-1" evidence="1">
    <location>
        <begin position="1"/>
        <end position="205"/>
    </location>
</feature>
<feature type="active site" description="Nucleophile" evidence="1">
    <location>
        <position position="79"/>
    </location>
</feature>
<feature type="active site" evidence="1">
    <location>
        <position position="180"/>
    </location>
</feature>
<feature type="active site" evidence="1">
    <location>
        <position position="182"/>
    </location>
</feature>
<reference key="1">
    <citation type="journal article" date="2008" name="Chem. Biol. Interact.">
        <title>Extending the Bacillus cereus group genomics to putative food-borne pathogens of different toxicity.</title>
        <authorList>
            <person name="Lapidus A."/>
            <person name="Goltsman E."/>
            <person name="Auger S."/>
            <person name="Galleron N."/>
            <person name="Segurens B."/>
            <person name="Dossat C."/>
            <person name="Land M.L."/>
            <person name="Broussolle V."/>
            <person name="Brillard J."/>
            <person name="Guinebretiere M.-H."/>
            <person name="Sanchis V."/>
            <person name="Nguen-the C."/>
            <person name="Lereclus D."/>
            <person name="Richardson P."/>
            <person name="Wincker P."/>
            <person name="Weissenbach J."/>
            <person name="Ehrlich S.D."/>
            <person name="Sorokin A."/>
        </authorList>
    </citation>
    <scope>NUCLEOTIDE SEQUENCE [LARGE SCALE GENOMIC DNA]</scope>
    <source>
        <strain>DSM 22905 / CIP 110041 / 391-98 / NVH 391-98</strain>
    </source>
</reference>
<name>HIS5_BACCN</name>